<evidence type="ECO:0000255" key="1">
    <source>
        <dbReference type="HAMAP-Rule" id="MF_01072"/>
    </source>
</evidence>
<accession>Q4KJM5</accession>
<feature type="chain" id="PRO_1000064610" description="Glucans biosynthesis glucosyltransferase H">
    <location>
        <begin position="1"/>
        <end position="856"/>
    </location>
</feature>
<feature type="transmembrane region" description="Helical" evidence="1">
    <location>
        <begin position="144"/>
        <end position="164"/>
    </location>
</feature>
<feature type="transmembrane region" description="Helical" evidence="1">
    <location>
        <begin position="198"/>
        <end position="218"/>
    </location>
</feature>
<feature type="transmembrane region" description="Helical" evidence="1">
    <location>
        <begin position="517"/>
        <end position="537"/>
    </location>
</feature>
<feature type="transmembrane region" description="Helical" evidence="1">
    <location>
        <begin position="574"/>
        <end position="594"/>
    </location>
</feature>
<feature type="transmembrane region" description="Helical" evidence="1">
    <location>
        <begin position="608"/>
        <end position="628"/>
    </location>
</feature>
<feature type="transmembrane region" description="Helical" evidence="1">
    <location>
        <begin position="684"/>
        <end position="704"/>
    </location>
</feature>
<sequence length="856" mass="96394">MSNSQLQPESLAEYLAHLPMSDQQRAELAGCQSFSELHQRLSSSTFDGPTDAAQASVGQRLTLSTAAELEEAEMLAVDAEGRVCLKATPPIRRTKVVPEPWRTNILVRGWRRLTGRTNPPAPKKDERVLPAARWRTVGSIRRYILLVLMLGQTIVAGWYMKGIMPYQGWSFVDLEEVMHQPLMQTAQQVLPYALQTSILILFGILFCWVSAGFWTALMGFLELLTGHDKYRISGASAGNEPIPKDARTALVMPICNEDVPRVFAGLRATFESVAATGDLDRFDFFVLSDSNDSDICVAEQQAWLDVCREAKGFGKIFYRRRRRRVKRKSGNLDDFCRRWGGDYKYMVVLDADSVMSGECLTSLVRLMEATPDAGIIQTAPRASGMDTLYARMQQFATRVYGPLFTAGLHFWQLGESHYWGHNAIIRMQPFIEHCALAPLPGKGAFAGAILSHDFVEAALMRRAGWGVWIAYDLPGSYEELPPNLLDELKRDRRWCHGNLMNFRLFLVKGMHPVHRAVFLTGVMSYLSAPLWFFFLVLSTALLAVNTLMEPQYFLEPRQLYPLWPQWHPDKAIALFSTTIVLLFLPKLLSIILIWAKGAKEFGGKFKVTLSMLLEMLFSMLLAPVRMIFHTRFVLAAFLGWAATWNSPQRDDDSTPWSEAVKRHGPQTLLGFCWALLVIWLNPSFLWWLVPIVGSLMLSIPVSVISSRVGLGLKSRDESLFLIPEEYAPPQALLATDQYTHENRWHALNDGFVRAVVDPQQNALACALATSRHTQAEPIEWLRQERVRHALKVGPAALNNSERLALLSDPVALGRLHEQVWSEGHSEWLSAWRQSVDADPHAPLLPLQPLNAAPQPA</sequence>
<proteinExistence type="inferred from homology"/>
<name>OPGH_PSEF5</name>
<keyword id="KW-0997">Cell inner membrane</keyword>
<keyword id="KW-1003">Cell membrane</keyword>
<keyword id="KW-0328">Glycosyltransferase</keyword>
<keyword id="KW-0472">Membrane</keyword>
<keyword id="KW-0808">Transferase</keyword>
<keyword id="KW-0812">Transmembrane</keyword>
<keyword id="KW-1133">Transmembrane helix</keyword>
<comment type="function">
    <text evidence="1">Involved in the biosynthesis of osmoregulated periplasmic glucans (OPGs).</text>
</comment>
<comment type="pathway">
    <text evidence="1">Glycan metabolism; osmoregulated periplasmic glucan (OPG) biosynthesis.</text>
</comment>
<comment type="subcellular location">
    <subcellularLocation>
        <location evidence="1">Cell inner membrane</location>
        <topology evidence="1">Multi-pass membrane protein</topology>
    </subcellularLocation>
</comment>
<comment type="similarity">
    <text evidence="1">Belongs to the glycosyltransferase 2 family. OpgH subfamily.</text>
</comment>
<dbReference type="EC" id="2.4.1.-" evidence="1"/>
<dbReference type="EMBL" id="CP000076">
    <property type="protein sequence ID" value="AAY95823.1"/>
    <property type="molecule type" value="Genomic_DNA"/>
</dbReference>
<dbReference type="STRING" id="220664.PFL_0414"/>
<dbReference type="CAZy" id="GT2">
    <property type="family name" value="Glycosyltransferase Family 2"/>
</dbReference>
<dbReference type="KEGG" id="pfl:PFL_0414"/>
<dbReference type="PATRIC" id="fig|220664.5.peg.422"/>
<dbReference type="eggNOG" id="COG2943">
    <property type="taxonomic scope" value="Bacteria"/>
</dbReference>
<dbReference type="HOGENOM" id="CLU_015730_1_0_6"/>
<dbReference type="UniPathway" id="UPA00637"/>
<dbReference type="Proteomes" id="UP000008540">
    <property type="component" value="Chromosome"/>
</dbReference>
<dbReference type="GO" id="GO:0005886">
    <property type="term" value="C:plasma membrane"/>
    <property type="evidence" value="ECO:0007669"/>
    <property type="project" value="UniProtKB-SubCell"/>
</dbReference>
<dbReference type="GO" id="GO:0016758">
    <property type="term" value="F:hexosyltransferase activity"/>
    <property type="evidence" value="ECO:0007669"/>
    <property type="project" value="UniProtKB-UniRule"/>
</dbReference>
<dbReference type="GO" id="GO:0009250">
    <property type="term" value="P:glucan biosynthetic process"/>
    <property type="evidence" value="ECO:0007669"/>
    <property type="project" value="UniProtKB-UniRule"/>
</dbReference>
<dbReference type="CDD" id="cd04191">
    <property type="entry name" value="Glucan_BSP_MdoH"/>
    <property type="match status" value="1"/>
</dbReference>
<dbReference type="FunFam" id="3.90.550.10:FF:000047">
    <property type="entry name" value="Glucans biosynthesis glucosyltransferase H"/>
    <property type="match status" value="1"/>
</dbReference>
<dbReference type="Gene3D" id="3.90.550.10">
    <property type="entry name" value="Spore Coat Polysaccharide Biosynthesis Protein SpsA, Chain A"/>
    <property type="match status" value="1"/>
</dbReference>
<dbReference type="HAMAP" id="MF_01072">
    <property type="entry name" value="MdoH_OpgH"/>
    <property type="match status" value="1"/>
</dbReference>
<dbReference type="InterPro" id="IPR023725">
    <property type="entry name" value="Glucans_biosynth_gluTrFase_H"/>
</dbReference>
<dbReference type="InterPro" id="IPR001173">
    <property type="entry name" value="Glyco_trans_2-like"/>
</dbReference>
<dbReference type="InterPro" id="IPR050321">
    <property type="entry name" value="Glycosyltr_2/OpgH_subfam"/>
</dbReference>
<dbReference type="InterPro" id="IPR029044">
    <property type="entry name" value="Nucleotide-diphossugar_trans"/>
</dbReference>
<dbReference type="NCBIfam" id="NF003955">
    <property type="entry name" value="PRK05454.1-1"/>
    <property type="match status" value="1"/>
</dbReference>
<dbReference type="NCBIfam" id="NF003958">
    <property type="entry name" value="PRK05454.2-1"/>
    <property type="match status" value="1"/>
</dbReference>
<dbReference type="NCBIfam" id="NF003962">
    <property type="entry name" value="PRK05454.2-5"/>
    <property type="match status" value="1"/>
</dbReference>
<dbReference type="PANTHER" id="PTHR43867">
    <property type="entry name" value="CELLULOSE SYNTHASE CATALYTIC SUBUNIT A [UDP-FORMING]"/>
    <property type="match status" value="1"/>
</dbReference>
<dbReference type="PANTHER" id="PTHR43867:SF5">
    <property type="entry name" value="GLUCANS BIOSYNTHESIS GLUCOSYLTRANSFERASE H"/>
    <property type="match status" value="1"/>
</dbReference>
<dbReference type="Pfam" id="PF00535">
    <property type="entry name" value="Glycos_transf_2"/>
    <property type="match status" value="1"/>
</dbReference>
<dbReference type="SUPFAM" id="SSF53448">
    <property type="entry name" value="Nucleotide-diphospho-sugar transferases"/>
    <property type="match status" value="1"/>
</dbReference>
<protein>
    <recommendedName>
        <fullName evidence="1">Glucans biosynthesis glucosyltransferase H</fullName>
        <ecNumber evidence="1">2.4.1.-</ecNumber>
    </recommendedName>
</protein>
<organism>
    <name type="scientific">Pseudomonas fluorescens (strain ATCC BAA-477 / NRRL B-23932 / Pf-5)</name>
    <dbReference type="NCBI Taxonomy" id="220664"/>
    <lineage>
        <taxon>Bacteria</taxon>
        <taxon>Pseudomonadati</taxon>
        <taxon>Pseudomonadota</taxon>
        <taxon>Gammaproteobacteria</taxon>
        <taxon>Pseudomonadales</taxon>
        <taxon>Pseudomonadaceae</taxon>
        <taxon>Pseudomonas</taxon>
    </lineage>
</organism>
<gene>
    <name evidence="1" type="primary">opgH</name>
    <name type="ordered locus">PFL_0414</name>
</gene>
<reference key="1">
    <citation type="journal article" date="2005" name="Nat. Biotechnol.">
        <title>Complete genome sequence of the plant commensal Pseudomonas fluorescens Pf-5.</title>
        <authorList>
            <person name="Paulsen I.T."/>
            <person name="Press C.M."/>
            <person name="Ravel J."/>
            <person name="Kobayashi D.Y."/>
            <person name="Myers G.S.A."/>
            <person name="Mavrodi D.V."/>
            <person name="DeBoy R.T."/>
            <person name="Seshadri R."/>
            <person name="Ren Q."/>
            <person name="Madupu R."/>
            <person name="Dodson R.J."/>
            <person name="Durkin A.S."/>
            <person name="Brinkac L.M."/>
            <person name="Daugherty S.C."/>
            <person name="Sullivan S.A."/>
            <person name="Rosovitz M.J."/>
            <person name="Gwinn M.L."/>
            <person name="Zhou L."/>
            <person name="Schneider D.J."/>
            <person name="Cartinhour S.W."/>
            <person name="Nelson W.C."/>
            <person name="Weidman J."/>
            <person name="Watkins K."/>
            <person name="Tran K."/>
            <person name="Khouri H."/>
            <person name="Pierson E.A."/>
            <person name="Pierson L.S. III"/>
            <person name="Thomashow L.S."/>
            <person name="Loper J.E."/>
        </authorList>
    </citation>
    <scope>NUCLEOTIDE SEQUENCE [LARGE SCALE GENOMIC DNA]</scope>
    <source>
        <strain>ATCC BAA-477 / NRRL B-23932 / Pf-5</strain>
    </source>
</reference>